<accession>Q487B0</accession>
<evidence type="ECO:0000255" key="1">
    <source>
        <dbReference type="HAMAP-Rule" id="MF_00072"/>
    </source>
</evidence>
<keyword id="KW-0963">Cytoplasm</keyword>
<keyword id="KW-0342">GTP-binding</keyword>
<keyword id="KW-0547">Nucleotide-binding</keyword>
<keyword id="KW-0648">Protein biosynthesis</keyword>
<feature type="chain" id="PRO_0000242171" description="Peptide chain release factor 3">
    <location>
        <begin position="1"/>
        <end position="526"/>
    </location>
</feature>
<feature type="domain" description="tr-type G">
    <location>
        <begin position="9"/>
        <end position="277"/>
    </location>
</feature>
<feature type="binding site" evidence="1">
    <location>
        <begin position="18"/>
        <end position="25"/>
    </location>
    <ligand>
        <name>GTP</name>
        <dbReference type="ChEBI" id="CHEBI:37565"/>
    </ligand>
</feature>
<feature type="binding site" evidence="1">
    <location>
        <begin position="86"/>
        <end position="90"/>
    </location>
    <ligand>
        <name>GTP</name>
        <dbReference type="ChEBI" id="CHEBI:37565"/>
    </ligand>
</feature>
<feature type="binding site" evidence="1">
    <location>
        <begin position="140"/>
        <end position="143"/>
    </location>
    <ligand>
        <name>GTP</name>
        <dbReference type="ChEBI" id="CHEBI:37565"/>
    </ligand>
</feature>
<gene>
    <name evidence="1" type="primary">prfC</name>
    <name type="ordered locus">CPS_1111</name>
</gene>
<comment type="function">
    <text evidence="1">Increases the formation of ribosomal termination complexes and stimulates activities of RF-1 and RF-2. It binds guanine nucleotides and has strong preference for UGA stop codons. It may interact directly with the ribosome. The stimulation of RF-1 and RF-2 is significantly reduced by GTP and GDP, but not by GMP.</text>
</comment>
<comment type="subcellular location">
    <subcellularLocation>
        <location evidence="1">Cytoplasm</location>
    </subcellularLocation>
</comment>
<comment type="similarity">
    <text evidence="1">Belongs to the TRAFAC class translation factor GTPase superfamily. Classic translation factor GTPase family. PrfC subfamily.</text>
</comment>
<protein>
    <recommendedName>
        <fullName evidence="1">Peptide chain release factor 3</fullName>
        <shortName evidence="1">RF-3</shortName>
    </recommendedName>
</protein>
<name>RF3_COLP3</name>
<organism>
    <name type="scientific">Colwellia psychrerythraea (strain 34H / ATCC BAA-681)</name>
    <name type="common">Vibrio psychroerythus</name>
    <dbReference type="NCBI Taxonomy" id="167879"/>
    <lineage>
        <taxon>Bacteria</taxon>
        <taxon>Pseudomonadati</taxon>
        <taxon>Pseudomonadota</taxon>
        <taxon>Gammaproteobacteria</taxon>
        <taxon>Alteromonadales</taxon>
        <taxon>Colwelliaceae</taxon>
        <taxon>Colwellia</taxon>
    </lineage>
</organism>
<reference key="1">
    <citation type="journal article" date="2005" name="Proc. Natl. Acad. Sci. U.S.A.">
        <title>The psychrophilic lifestyle as revealed by the genome sequence of Colwellia psychrerythraea 34H through genomic and proteomic analyses.</title>
        <authorList>
            <person name="Methe B.A."/>
            <person name="Nelson K.E."/>
            <person name="Deming J.W."/>
            <person name="Momen B."/>
            <person name="Melamud E."/>
            <person name="Zhang X."/>
            <person name="Moult J."/>
            <person name="Madupu R."/>
            <person name="Nelson W.C."/>
            <person name="Dodson R.J."/>
            <person name="Brinkac L.M."/>
            <person name="Daugherty S.C."/>
            <person name="Durkin A.S."/>
            <person name="DeBoy R.T."/>
            <person name="Kolonay J.F."/>
            <person name="Sullivan S.A."/>
            <person name="Zhou L."/>
            <person name="Davidsen T.M."/>
            <person name="Wu M."/>
            <person name="Huston A.L."/>
            <person name="Lewis M."/>
            <person name="Weaver B."/>
            <person name="Weidman J.F."/>
            <person name="Khouri H."/>
            <person name="Utterback T.R."/>
            <person name="Feldblyum T.V."/>
            <person name="Fraser C.M."/>
        </authorList>
    </citation>
    <scope>NUCLEOTIDE SEQUENCE [LARGE SCALE GENOMIC DNA]</scope>
    <source>
        <strain>34H / ATCC BAA-681</strain>
    </source>
</reference>
<dbReference type="EMBL" id="CP000083">
    <property type="protein sequence ID" value="AAZ27621.1"/>
    <property type="molecule type" value="Genomic_DNA"/>
</dbReference>
<dbReference type="RefSeq" id="WP_011041949.1">
    <property type="nucleotide sequence ID" value="NC_003910.7"/>
</dbReference>
<dbReference type="SMR" id="Q487B0"/>
<dbReference type="STRING" id="167879.CPS_1111"/>
<dbReference type="KEGG" id="cps:CPS_1111"/>
<dbReference type="eggNOG" id="COG4108">
    <property type="taxonomic scope" value="Bacteria"/>
</dbReference>
<dbReference type="HOGENOM" id="CLU_002794_2_1_6"/>
<dbReference type="Proteomes" id="UP000000547">
    <property type="component" value="Chromosome"/>
</dbReference>
<dbReference type="GO" id="GO:0005829">
    <property type="term" value="C:cytosol"/>
    <property type="evidence" value="ECO:0007669"/>
    <property type="project" value="TreeGrafter"/>
</dbReference>
<dbReference type="GO" id="GO:0005525">
    <property type="term" value="F:GTP binding"/>
    <property type="evidence" value="ECO:0007669"/>
    <property type="project" value="UniProtKB-UniRule"/>
</dbReference>
<dbReference type="GO" id="GO:0003924">
    <property type="term" value="F:GTPase activity"/>
    <property type="evidence" value="ECO:0007669"/>
    <property type="project" value="InterPro"/>
</dbReference>
<dbReference type="GO" id="GO:0097216">
    <property type="term" value="F:guanosine tetraphosphate binding"/>
    <property type="evidence" value="ECO:0007669"/>
    <property type="project" value="UniProtKB-ARBA"/>
</dbReference>
<dbReference type="GO" id="GO:0016150">
    <property type="term" value="F:translation release factor activity, codon nonspecific"/>
    <property type="evidence" value="ECO:0007669"/>
    <property type="project" value="TreeGrafter"/>
</dbReference>
<dbReference type="GO" id="GO:0016149">
    <property type="term" value="F:translation release factor activity, codon specific"/>
    <property type="evidence" value="ECO:0007669"/>
    <property type="project" value="UniProtKB-UniRule"/>
</dbReference>
<dbReference type="GO" id="GO:0006449">
    <property type="term" value="P:regulation of translational termination"/>
    <property type="evidence" value="ECO:0007669"/>
    <property type="project" value="UniProtKB-UniRule"/>
</dbReference>
<dbReference type="CDD" id="cd04169">
    <property type="entry name" value="RF3"/>
    <property type="match status" value="1"/>
</dbReference>
<dbReference type="CDD" id="cd03689">
    <property type="entry name" value="RF3_II"/>
    <property type="match status" value="1"/>
</dbReference>
<dbReference type="CDD" id="cd16259">
    <property type="entry name" value="RF3_III"/>
    <property type="match status" value="1"/>
</dbReference>
<dbReference type="FunFam" id="2.40.30.10:FF:000040">
    <property type="entry name" value="Peptide chain release factor 3"/>
    <property type="match status" value="1"/>
</dbReference>
<dbReference type="FunFam" id="3.30.70.3280:FF:000001">
    <property type="entry name" value="Peptide chain release factor 3"/>
    <property type="match status" value="1"/>
</dbReference>
<dbReference type="FunFam" id="3.40.50.300:FF:000542">
    <property type="entry name" value="Peptide chain release factor 3"/>
    <property type="match status" value="1"/>
</dbReference>
<dbReference type="Gene3D" id="3.40.50.300">
    <property type="entry name" value="P-loop containing nucleotide triphosphate hydrolases"/>
    <property type="match status" value="2"/>
</dbReference>
<dbReference type="Gene3D" id="3.30.70.3280">
    <property type="entry name" value="Peptide chain release factor 3, domain III"/>
    <property type="match status" value="1"/>
</dbReference>
<dbReference type="HAMAP" id="MF_00072">
    <property type="entry name" value="Rel_fac_3"/>
    <property type="match status" value="1"/>
</dbReference>
<dbReference type="InterPro" id="IPR053905">
    <property type="entry name" value="EF-G-like_DII"/>
</dbReference>
<dbReference type="InterPro" id="IPR035647">
    <property type="entry name" value="EFG_III/V"/>
</dbReference>
<dbReference type="InterPro" id="IPR031157">
    <property type="entry name" value="G_TR_CS"/>
</dbReference>
<dbReference type="InterPro" id="IPR027417">
    <property type="entry name" value="P-loop_NTPase"/>
</dbReference>
<dbReference type="InterPro" id="IPR004548">
    <property type="entry name" value="PrfC"/>
</dbReference>
<dbReference type="InterPro" id="IPR032090">
    <property type="entry name" value="RF3_C"/>
</dbReference>
<dbReference type="InterPro" id="IPR038467">
    <property type="entry name" value="RF3_dom_3_sf"/>
</dbReference>
<dbReference type="InterPro" id="IPR041732">
    <property type="entry name" value="RF3_GTP-bd"/>
</dbReference>
<dbReference type="InterPro" id="IPR005225">
    <property type="entry name" value="Small_GTP-bd"/>
</dbReference>
<dbReference type="InterPro" id="IPR000795">
    <property type="entry name" value="T_Tr_GTP-bd_dom"/>
</dbReference>
<dbReference type="InterPro" id="IPR009000">
    <property type="entry name" value="Transl_B-barrel_sf"/>
</dbReference>
<dbReference type="NCBIfam" id="TIGR00503">
    <property type="entry name" value="prfC"/>
    <property type="match status" value="1"/>
</dbReference>
<dbReference type="NCBIfam" id="NF001964">
    <property type="entry name" value="PRK00741.1"/>
    <property type="match status" value="1"/>
</dbReference>
<dbReference type="NCBIfam" id="TIGR00231">
    <property type="entry name" value="small_GTP"/>
    <property type="match status" value="1"/>
</dbReference>
<dbReference type="PANTHER" id="PTHR43556">
    <property type="entry name" value="PEPTIDE CHAIN RELEASE FACTOR RF3"/>
    <property type="match status" value="1"/>
</dbReference>
<dbReference type="PANTHER" id="PTHR43556:SF2">
    <property type="entry name" value="PEPTIDE CHAIN RELEASE FACTOR RF3"/>
    <property type="match status" value="1"/>
</dbReference>
<dbReference type="Pfam" id="PF22042">
    <property type="entry name" value="EF-G_D2"/>
    <property type="match status" value="1"/>
</dbReference>
<dbReference type="Pfam" id="PF00009">
    <property type="entry name" value="GTP_EFTU"/>
    <property type="match status" value="1"/>
</dbReference>
<dbReference type="Pfam" id="PF16658">
    <property type="entry name" value="RF3_C"/>
    <property type="match status" value="1"/>
</dbReference>
<dbReference type="PRINTS" id="PR00315">
    <property type="entry name" value="ELONGATNFCT"/>
</dbReference>
<dbReference type="SUPFAM" id="SSF54980">
    <property type="entry name" value="EF-G C-terminal domain-like"/>
    <property type="match status" value="1"/>
</dbReference>
<dbReference type="SUPFAM" id="SSF52540">
    <property type="entry name" value="P-loop containing nucleoside triphosphate hydrolases"/>
    <property type="match status" value="1"/>
</dbReference>
<dbReference type="SUPFAM" id="SSF50447">
    <property type="entry name" value="Translation proteins"/>
    <property type="match status" value="1"/>
</dbReference>
<dbReference type="PROSITE" id="PS00301">
    <property type="entry name" value="G_TR_1"/>
    <property type="match status" value="1"/>
</dbReference>
<dbReference type="PROSITE" id="PS51722">
    <property type="entry name" value="G_TR_2"/>
    <property type="match status" value="1"/>
</dbReference>
<proteinExistence type="inferred from homology"/>
<sequence length="526" mass="59375">MSVQQQQVDLRRTFAIISHPDAGKTTITEKVLLFGQALQRAGTVKGKKSGQHAKSDWMEMEKERGISITTSVMQFPYNDCLVNLLDTPGHEDFSEDTYRTLTAVDSCLMVIDVAKGVEARTVKLMEVTRLRDTPIITFMNKMDRDVRDPMEVMDEVEEVLKIKCAAITWPIGMGKEFKGIYHILDDEITLYQSGLGHMIQEKRVIKGLNNPELDKIIGNYADDLREELELVSGASHDFNLEEFLKGELTPVFFGTALGNFGVDHMLDGLTKWAPKPLPRKTDLREVTAEEEKFSGFVFKIQANMDPKHRDRIAFMRICSGKYEKGMKMKQVRLAKDVKIADAVTFMAGDRSNVEEAFAGDIIGLHNHGSIQIGDTFTAGEMMKFSGIPNFAPEMFRRIRLRDPLKAKQLQKGLIQLSEEGAVQVFRPFINNDMIVGAVGVLQFEVVVQRLKTEYKVDAIYEAISVATARWCTCDDERTLEQFKKKSGDYLALDGGNNLTYIAPTMVNLSLAQERNPDIVFHSTREH</sequence>